<keyword id="KW-0067">ATP-binding</keyword>
<keyword id="KW-0963">Cytoplasm</keyword>
<keyword id="KW-0418">Kinase</keyword>
<keyword id="KW-0520">NAD</keyword>
<keyword id="KW-0521">NADP</keyword>
<keyword id="KW-0547">Nucleotide-binding</keyword>
<keyword id="KW-0808">Transferase</keyword>
<accession>B9LAP2</accession>
<feature type="chain" id="PRO_1000133563" description="NAD kinase">
    <location>
        <begin position="1"/>
        <end position="276"/>
    </location>
</feature>
<feature type="active site" description="Proton acceptor" evidence="1">
    <location>
        <position position="61"/>
    </location>
</feature>
<feature type="binding site" evidence="1">
    <location>
        <begin position="61"/>
        <end position="62"/>
    </location>
    <ligand>
        <name>NAD(+)</name>
        <dbReference type="ChEBI" id="CHEBI:57540"/>
    </ligand>
</feature>
<feature type="binding site" evidence="1">
    <location>
        <position position="66"/>
    </location>
    <ligand>
        <name>NAD(+)</name>
        <dbReference type="ChEBI" id="CHEBI:57540"/>
    </ligand>
</feature>
<feature type="binding site" evidence="1">
    <location>
        <begin position="135"/>
        <end position="136"/>
    </location>
    <ligand>
        <name>NAD(+)</name>
        <dbReference type="ChEBI" id="CHEBI:57540"/>
    </ligand>
</feature>
<feature type="binding site" evidence="1">
    <location>
        <position position="146"/>
    </location>
    <ligand>
        <name>NAD(+)</name>
        <dbReference type="ChEBI" id="CHEBI:57540"/>
    </ligand>
</feature>
<feature type="binding site" evidence="1">
    <location>
        <position position="163"/>
    </location>
    <ligand>
        <name>NAD(+)</name>
        <dbReference type="ChEBI" id="CHEBI:57540"/>
    </ligand>
</feature>
<feature type="binding site" evidence="1">
    <location>
        <position position="165"/>
    </location>
    <ligand>
        <name>NAD(+)</name>
        <dbReference type="ChEBI" id="CHEBI:57540"/>
    </ligand>
</feature>
<feature type="binding site" evidence="1">
    <location>
        <position position="200"/>
    </location>
    <ligand>
        <name>NAD(+)</name>
        <dbReference type="ChEBI" id="CHEBI:57540"/>
    </ligand>
</feature>
<protein>
    <recommendedName>
        <fullName evidence="1">NAD kinase</fullName>
        <ecNumber evidence="1">2.7.1.23</ecNumber>
    </recommendedName>
    <alternativeName>
        <fullName evidence="1">ATP-dependent NAD kinase</fullName>
    </alternativeName>
</protein>
<proteinExistence type="inferred from homology"/>
<comment type="function">
    <text evidence="1">Involved in the regulation of the intracellular balance of NAD and NADP, and is a key enzyme in the biosynthesis of NADP. Catalyzes specifically the phosphorylation on 2'-hydroxyl of the adenosine moiety of NAD to yield NADP.</text>
</comment>
<comment type="catalytic activity">
    <reaction evidence="1">
        <text>NAD(+) + ATP = ADP + NADP(+) + H(+)</text>
        <dbReference type="Rhea" id="RHEA:18629"/>
        <dbReference type="ChEBI" id="CHEBI:15378"/>
        <dbReference type="ChEBI" id="CHEBI:30616"/>
        <dbReference type="ChEBI" id="CHEBI:57540"/>
        <dbReference type="ChEBI" id="CHEBI:58349"/>
        <dbReference type="ChEBI" id="CHEBI:456216"/>
        <dbReference type="EC" id="2.7.1.23"/>
    </reaction>
</comment>
<comment type="cofactor">
    <cofactor evidence="1">
        <name>a divalent metal cation</name>
        <dbReference type="ChEBI" id="CHEBI:60240"/>
    </cofactor>
</comment>
<comment type="subcellular location">
    <subcellularLocation>
        <location evidence="1">Cytoplasm</location>
    </subcellularLocation>
</comment>
<comment type="similarity">
    <text evidence="1">Belongs to the NAD kinase family.</text>
</comment>
<reference key="1">
    <citation type="submission" date="2009-01" db="EMBL/GenBank/DDBJ databases">
        <title>Complete sequence of Chloroflexus sp. Y-400-fl.</title>
        <authorList>
            <consortium name="US DOE Joint Genome Institute"/>
            <person name="Lucas S."/>
            <person name="Copeland A."/>
            <person name="Lapidus A."/>
            <person name="Glavina del Rio T."/>
            <person name="Dalin E."/>
            <person name="Tice H."/>
            <person name="Bruce D."/>
            <person name="Goodwin L."/>
            <person name="Pitluck S."/>
            <person name="Sims D."/>
            <person name="Kiss H."/>
            <person name="Brettin T."/>
            <person name="Detter J.C."/>
            <person name="Han C."/>
            <person name="Larimer F."/>
            <person name="Land M."/>
            <person name="Hauser L."/>
            <person name="Kyrpides N."/>
            <person name="Ovchinnikova G."/>
            <person name="Bryant D.A."/>
            <person name="Richardson P."/>
        </authorList>
    </citation>
    <scope>NUCLEOTIDE SEQUENCE [LARGE SCALE GENOMIC DNA]</scope>
    <source>
        <strain>ATCC 29364 / DSM 637 / Y-400-fl</strain>
    </source>
</reference>
<evidence type="ECO:0000255" key="1">
    <source>
        <dbReference type="HAMAP-Rule" id="MF_00361"/>
    </source>
</evidence>
<gene>
    <name evidence="1" type="primary">nadK</name>
    <name type="ordered locus">Chy400_1167</name>
</gene>
<dbReference type="EC" id="2.7.1.23" evidence="1"/>
<dbReference type="EMBL" id="CP001364">
    <property type="protein sequence ID" value="ACM52588.1"/>
    <property type="molecule type" value="Genomic_DNA"/>
</dbReference>
<dbReference type="SMR" id="B9LAP2"/>
<dbReference type="KEGG" id="chl:Chy400_1167"/>
<dbReference type="HOGENOM" id="CLU_008831_0_0_0"/>
<dbReference type="OrthoDB" id="9774737at2"/>
<dbReference type="GO" id="GO:0005737">
    <property type="term" value="C:cytoplasm"/>
    <property type="evidence" value="ECO:0007669"/>
    <property type="project" value="UniProtKB-SubCell"/>
</dbReference>
<dbReference type="GO" id="GO:0005524">
    <property type="term" value="F:ATP binding"/>
    <property type="evidence" value="ECO:0007669"/>
    <property type="project" value="UniProtKB-KW"/>
</dbReference>
<dbReference type="GO" id="GO:0046872">
    <property type="term" value="F:metal ion binding"/>
    <property type="evidence" value="ECO:0007669"/>
    <property type="project" value="UniProtKB-UniRule"/>
</dbReference>
<dbReference type="GO" id="GO:0051287">
    <property type="term" value="F:NAD binding"/>
    <property type="evidence" value="ECO:0007669"/>
    <property type="project" value="UniProtKB-ARBA"/>
</dbReference>
<dbReference type="GO" id="GO:0003951">
    <property type="term" value="F:NAD+ kinase activity"/>
    <property type="evidence" value="ECO:0007669"/>
    <property type="project" value="UniProtKB-UniRule"/>
</dbReference>
<dbReference type="GO" id="GO:0019674">
    <property type="term" value="P:NAD metabolic process"/>
    <property type="evidence" value="ECO:0007669"/>
    <property type="project" value="InterPro"/>
</dbReference>
<dbReference type="GO" id="GO:0006741">
    <property type="term" value="P:NADP biosynthetic process"/>
    <property type="evidence" value="ECO:0007669"/>
    <property type="project" value="UniProtKB-UniRule"/>
</dbReference>
<dbReference type="Gene3D" id="3.40.50.10330">
    <property type="entry name" value="Probable inorganic polyphosphate/atp-NAD kinase, domain 1"/>
    <property type="match status" value="1"/>
</dbReference>
<dbReference type="Gene3D" id="2.60.200.30">
    <property type="entry name" value="Probable inorganic polyphosphate/atp-NAD kinase, domain 2"/>
    <property type="match status" value="1"/>
</dbReference>
<dbReference type="HAMAP" id="MF_00361">
    <property type="entry name" value="NAD_kinase"/>
    <property type="match status" value="1"/>
</dbReference>
<dbReference type="InterPro" id="IPR017438">
    <property type="entry name" value="ATP-NAD_kinase_N"/>
</dbReference>
<dbReference type="InterPro" id="IPR017437">
    <property type="entry name" value="ATP-NAD_kinase_PpnK-typ_C"/>
</dbReference>
<dbReference type="InterPro" id="IPR016064">
    <property type="entry name" value="NAD/diacylglycerol_kinase_sf"/>
</dbReference>
<dbReference type="InterPro" id="IPR002504">
    <property type="entry name" value="NADK"/>
</dbReference>
<dbReference type="PANTHER" id="PTHR20275">
    <property type="entry name" value="NAD KINASE"/>
    <property type="match status" value="1"/>
</dbReference>
<dbReference type="PANTHER" id="PTHR20275:SF0">
    <property type="entry name" value="NAD KINASE"/>
    <property type="match status" value="1"/>
</dbReference>
<dbReference type="Pfam" id="PF01513">
    <property type="entry name" value="NAD_kinase"/>
    <property type="match status" value="1"/>
</dbReference>
<dbReference type="Pfam" id="PF20143">
    <property type="entry name" value="NAD_kinase_C"/>
    <property type="match status" value="1"/>
</dbReference>
<dbReference type="SUPFAM" id="SSF111331">
    <property type="entry name" value="NAD kinase/diacylglycerol kinase-like"/>
    <property type="match status" value="1"/>
</dbReference>
<organism>
    <name type="scientific">Chloroflexus aurantiacus (strain ATCC 29364 / DSM 637 / Y-400-fl)</name>
    <dbReference type="NCBI Taxonomy" id="480224"/>
    <lineage>
        <taxon>Bacteria</taxon>
        <taxon>Bacillati</taxon>
        <taxon>Chloroflexota</taxon>
        <taxon>Chloroflexia</taxon>
        <taxon>Chloroflexales</taxon>
        <taxon>Chloroflexineae</taxon>
        <taxon>Chloroflexaceae</taxon>
        <taxon>Chloroflexus</taxon>
    </lineage>
</organism>
<sequence>MLERVAVLYNPLSDASIKLSRELADWLVERGVKTTRGVSQEFRDQPHLVADCDLMIALGGDGTVLRAARLCFPHNIPVLPVALGHLSFMAEIGPDEVYSGCEQIMNGGGWFDERSLVRAQLWRGGQKLSQHTALNEVVISRSDLSRIVNVHVTIDDSPLTTYHADGVIVATATGSTAYALAAGGPIVDPRSQALVLVPIAAHLTNIPSMVLHEDAVVTMQLRSRHHALLAVDGRENIDLIEGDEVVVRRSPQVCTFVRLRPSNQFYTQLVARLRRS</sequence>
<name>NADK_CHLSY</name>